<protein>
    <recommendedName>
        <fullName evidence="1">Elongation factor G</fullName>
        <shortName evidence="1">EF-G</shortName>
    </recommendedName>
</protein>
<keyword id="KW-0963">Cytoplasm</keyword>
<keyword id="KW-0251">Elongation factor</keyword>
<keyword id="KW-0342">GTP-binding</keyword>
<keyword id="KW-0547">Nucleotide-binding</keyword>
<keyword id="KW-0648">Protein biosynthesis</keyword>
<keyword id="KW-1185">Reference proteome</keyword>
<accession>Q30Z38</accession>
<organism>
    <name type="scientific">Oleidesulfovibrio alaskensis (strain ATCC BAA-1058 / DSM 17464 / G20)</name>
    <name type="common">Desulfovibrio alaskensis</name>
    <dbReference type="NCBI Taxonomy" id="207559"/>
    <lineage>
        <taxon>Bacteria</taxon>
        <taxon>Pseudomonadati</taxon>
        <taxon>Thermodesulfobacteriota</taxon>
        <taxon>Desulfovibrionia</taxon>
        <taxon>Desulfovibrionales</taxon>
        <taxon>Desulfovibrionaceae</taxon>
        <taxon>Oleidesulfovibrio</taxon>
    </lineage>
</organism>
<gene>
    <name evidence="1" type="primary">fusA</name>
    <name type="ordered locus">Dde_2261</name>
</gene>
<dbReference type="EMBL" id="CP000112">
    <property type="protein sequence ID" value="ABB39058.1"/>
    <property type="molecule type" value="Genomic_DNA"/>
</dbReference>
<dbReference type="RefSeq" id="WP_011368146.1">
    <property type="nucleotide sequence ID" value="NC_007519.1"/>
</dbReference>
<dbReference type="SMR" id="Q30Z38"/>
<dbReference type="STRING" id="207559.Dde_2261"/>
<dbReference type="KEGG" id="dde:Dde_2261"/>
<dbReference type="eggNOG" id="COG0480">
    <property type="taxonomic scope" value="Bacteria"/>
</dbReference>
<dbReference type="HOGENOM" id="CLU_002794_4_1_7"/>
<dbReference type="Proteomes" id="UP000002710">
    <property type="component" value="Chromosome"/>
</dbReference>
<dbReference type="GO" id="GO:0005737">
    <property type="term" value="C:cytoplasm"/>
    <property type="evidence" value="ECO:0007669"/>
    <property type="project" value="UniProtKB-SubCell"/>
</dbReference>
<dbReference type="GO" id="GO:0005525">
    <property type="term" value="F:GTP binding"/>
    <property type="evidence" value="ECO:0007669"/>
    <property type="project" value="UniProtKB-UniRule"/>
</dbReference>
<dbReference type="GO" id="GO:0003924">
    <property type="term" value="F:GTPase activity"/>
    <property type="evidence" value="ECO:0007669"/>
    <property type="project" value="InterPro"/>
</dbReference>
<dbReference type="GO" id="GO:0003746">
    <property type="term" value="F:translation elongation factor activity"/>
    <property type="evidence" value="ECO:0007669"/>
    <property type="project" value="UniProtKB-UniRule"/>
</dbReference>
<dbReference type="GO" id="GO:0032790">
    <property type="term" value="P:ribosome disassembly"/>
    <property type="evidence" value="ECO:0007669"/>
    <property type="project" value="TreeGrafter"/>
</dbReference>
<dbReference type="CDD" id="cd01886">
    <property type="entry name" value="EF-G"/>
    <property type="match status" value="1"/>
</dbReference>
<dbReference type="CDD" id="cd16262">
    <property type="entry name" value="EFG_III"/>
    <property type="match status" value="1"/>
</dbReference>
<dbReference type="CDD" id="cd01434">
    <property type="entry name" value="EFG_mtEFG1_IV"/>
    <property type="match status" value="1"/>
</dbReference>
<dbReference type="CDD" id="cd03713">
    <property type="entry name" value="EFG_mtEFG_C"/>
    <property type="match status" value="1"/>
</dbReference>
<dbReference type="CDD" id="cd04088">
    <property type="entry name" value="EFG_mtEFG_II"/>
    <property type="match status" value="1"/>
</dbReference>
<dbReference type="FunFam" id="2.40.30.10:FF:000006">
    <property type="entry name" value="Elongation factor G"/>
    <property type="match status" value="1"/>
</dbReference>
<dbReference type="FunFam" id="3.30.230.10:FF:000003">
    <property type="entry name" value="Elongation factor G"/>
    <property type="match status" value="1"/>
</dbReference>
<dbReference type="FunFam" id="3.30.70.240:FF:000001">
    <property type="entry name" value="Elongation factor G"/>
    <property type="match status" value="1"/>
</dbReference>
<dbReference type="FunFam" id="3.30.70.870:FF:000001">
    <property type="entry name" value="Elongation factor G"/>
    <property type="match status" value="1"/>
</dbReference>
<dbReference type="FunFam" id="3.40.50.300:FF:000029">
    <property type="entry name" value="Elongation factor G"/>
    <property type="match status" value="1"/>
</dbReference>
<dbReference type="Gene3D" id="3.30.230.10">
    <property type="match status" value="1"/>
</dbReference>
<dbReference type="Gene3D" id="3.30.70.240">
    <property type="match status" value="1"/>
</dbReference>
<dbReference type="Gene3D" id="3.30.70.870">
    <property type="entry name" value="Elongation Factor G (Translational Gtpase), domain 3"/>
    <property type="match status" value="1"/>
</dbReference>
<dbReference type="Gene3D" id="3.40.50.300">
    <property type="entry name" value="P-loop containing nucleotide triphosphate hydrolases"/>
    <property type="match status" value="1"/>
</dbReference>
<dbReference type="Gene3D" id="2.40.30.10">
    <property type="entry name" value="Translation factors"/>
    <property type="match status" value="1"/>
</dbReference>
<dbReference type="HAMAP" id="MF_00054_B">
    <property type="entry name" value="EF_G_EF_2_B"/>
    <property type="match status" value="1"/>
</dbReference>
<dbReference type="InterPro" id="IPR041095">
    <property type="entry name" value="EFG_II"/>
</dbReference>
<dbReference type="InterPro" id="IPR009022">
    <property type="entry name" value="EFG_III"/>
</dbReference>
<dbReference type="InterPro" id="IPR035647">
    <property type="entry name" value="EFG_III/V"/>
</dbReference>
<dbReference type="InterPro" id="IPR047872">
    <property type="entry name" value="EFG_IV"/>
</dbReference>
<dbReference type="InterPro" id="IPR035649">
    <property type="entry name" value="EFG_V"/>
</dbReference>
<dbReference type="InterPro" id="IPR000640">
    <property type="entry name" value="EFG_V-like"/>
</dbReference>
<dbReference type="InterPro" id="IPR004161">
    <property type="entry name" value="EFTu-like_2"/>
</dbReference>
<dbReference type="InterPro" id="IPR031157">
    <property type="entry name" value="G_TR_CS"/>
</dbReference>
<dbReference type="InterPro" id="IPR027417">
    <property type="entry name" value="P-loop_NTPase"/>
</dbReference>
<dbReference type="InterPro" id="IPR020568">
    <property type="entry name" value="Ribosomal_Su5_D2-typ_SF"/>
</dbReference>
<dbReference type="InterPro" id="IPR014721">
    <property type="entry name" value="Ribsml_uS5_D2-typ_fold_subgr"/>
</dbReference>
<dbReference type="InterPro" id="IPR005225">
    <property type="entry name" value="Small_GTP-bd"/>
</dbReference>
<dbReference type="InterPro" id="IPR000795">
    <property type="entry name" value="T_Tr_GTP-bd_dom"/>
</dbReference>
<dbReference type="InterPro" id="IPR009000">
    <property type="entry name" value="Transl_B-barrel_sf"/>
</dbReference>
<dbReference type="InterPro" id="IPR004540">
    <property type="entry name" value="Transl_elong_EFG/EF2"/>
</dbReference>
<dbReference type="InterPro" id="IPR005517">
    <property type="entry name" value="Transl_elong_EFG/EF2_IV"/>
</dbReference>
<dbReference type="NCBIfam" id="TIGR00484">
    <property type="entry name" value="EF-G"/>
    <property type="match status" value="1"/>
</dbReference>
<dbReference type="NCBIfam" id="NF009379">
    <property type="entry name" value="PRK12740.1-3"/>
    <property type="match status" value="1"/>
</dbReference>
<dbReference type="NCBIfam" id="NF009381">
    <property type="entry name" value="PRK12740.1-5"/>
    <property type="match status" value="1"/>
</dbReference>
<dbReference type="NCBIfam" id="TIGR00231">
    <property type="entry name" value="small_GTP"/>
    <property type="match status" value="1"/>
</dbReference>
<dbReference type="PANTHER" id="PTHR43261:SF1">
    <property type="entry name" value="RIBOSOME-RELEASING FACTOR 2, MITOCHONDRIAL"/>
    <property type="match status" value="1"/>
</dbReference>
<dbReference type="PANTHER" id="PTHR43261">
    <property type="entry name" value="TRANSLATION ELONGATION FACTOR G-RELATED"/>
    <property type="match status" value="1"/>
</dbReference>
<dbReference type="Pfam" id="PF00679">
    <property type="entry name" value="EFG_C"/>
    <property type="match status" value="1"/>
</dbReference>
<dbReference type="Pfam" id="PF14492">
    <property type="entry name" value="EFG_III"/>
    <property type="match status" value="1"/>
</dbReference>
<dbReference type="Pfam" id="PF03764">
    <property type="entry name" value="EFG_IV"/>
    <property type="match status" value="1"/>
</dbReference>
<dbReference type="Pfam" id="PF00009">
    <property type="entry name" value="GTP_EFTU"/>
    <property type="match status" value="1"/>
</dbReference>
<dbReference type="Pfam" id="PF03144">
    <property type="entry name" value="GTP_EFTU_D2"/>
    <property type="match status" value="1"/>
</dbReference>
<dbReference type="PRINTS" id="PR00315">
    <property type="entry name" value="ELONGATNFCT"/>
</dbReference>
<dbReference type="SMART" id="SM00838">
    <property type="entry name" value="EFG_C"/>
    <property type="match status" value="1"/>
</dbReference>
<dbReference type="SMART" id="SM00889">
    <property type="entry name" value="EFG_IV"/>
    <property type="match status" value="1"/>
</dbReference>
<dbReference type="SUPFAM" id="SSF54980">
    <property type="entry name" value="EF-G C-terminal domain-like"/>
    <property type="match status" value="2"/>
</dbReference>
<dbReference type="SUPFAM" id="SSF52540">
    <property type="entry name" value="P-loop containing nucleoside triphosphate hydrolases"/>
    <property type="match status" value="1"/>
</dbReference>
<dbReference type="SUPFAM" id="SSF54211">
    <property type="entry name" value="Ribosomal protein S5 domain 2-like"/>
    <property type="match status" value="1"/>
</dbReference>
<dbReference type="SUPFAM" id="SSF50447">
    <property type="entry name" value="Translation proteins"/>
    <property type="match status" value="1"/>
</dbReference>
<dbReference type="PROSITE" id="PS00301">
    <property type="entry name" value="G_TR_1"/>
    <property type="match status" value="1"/>
</dbReference>
<dbReference type="PROSITE" id="PS51722">
    <property type="entry name" value="G_TR_2"/>
    <property type="match status" value="1"/>
</dbReference>
<reference key="1">
    <citation type="journal article" date="2011" name="J. Bacteriol.">
        <title>Complete genome sequence and updated annotation of Desulfovibrio alaskensis G20.</title>
        <authorList>
            <person name="Hauser L.J."/>
            <person name="Land M.L."/>
            <person name="Brown S.D."/>
            <person name="Larimer F."/>
            <person name="Keller K.L."/>
            <person name="Rapp-Giles B.J."/>
            <person name="Price M.N."/>
            <person name="Lin M."/>
            <person name="Bruce D.C."/>
            <person name="Detter J.C."/>
            <person name="Tapia R."/>
            <person name="Han C.S."/>
            <person name="Goodwin L.A."/>
            <person name="Cheng J.F."/>
            <person name="Pitluck S."/>
            <person name="Copeland A."/>
            <person name="Lucas S."/>
            <person name="Nolan M."/>
            <person name="Lapidus A.L."/>
            <person name="Palumbo A.V."/>
            <person name="Wall J.D."/>
        </authorList>
    </citation>
    <scope>NUCLEOTIDE SEQUENCE [LARGE SCALE GENOMIC DNA]</scope>
    <source>
        <strain>ATCC BAA-1058 / DSM 17464 / G20</strain>
    </source>
</reference>
<sequence>MSRKVAIPQQRNIGIMAHIDAGKTTTTERILFYTGVSHKIGETHEGQATMDWMEQEQERGITITSAATTCFWKDCRINIIDTPGHVDFTIEVERALRVLDGAVAVFDAVAGVEPQSETVWRQADRYKVPRICFVNKMDRMGANFFRCVDMIRDRLKAKPLALQVPIGSEDEFQGIVDLVTGKAVVFDKASKGAEFAVTGVPAELQDQFDVMRLELIEAVAEEDDALMEKYLGGEELTEEEIHSAIRRATIARTAVPVLCGSAFRNMGVQPLLDAVVEYLPSPVDIEQMVGANPDNEEEKIVCPCKDEEPLAALVFKLASDPYIGHLSFIRIYSGFIEAGMTVYNANTGKKERIGRLLKMHANKREEIKWAGAGDIVAAVGLKQVSTGDTICEINRPVVLESLDIPEPVIEVAIEPKTKADRDALSAALAKLAKEDPSFRVKGDDETNQTLIAGMGELHLDIIVDRLTREFSVNANVGKPQVAYRETISKETKVDHKYAKQSGGRGQYGHVVIEVEPNPEKGYLFENKITGGVIPKEYIPAVDKGIQDALKSGVLAGYPMVDVKVALVFGSYHEVDSSEQAFYVAGSMAVKEAARKASPVLLEPVMDVEVVTPEEYLGDVMGDLNGRRGKIQSMDSRAGAQVIRCHVPLSEMFGYATDLRSRTQGRANFTMQFDHYERVPANLAEELTKSKSGE</sequence>
<feature type="chain" id="PRO_0000225210" description="Elongation factor G">
    <location>
        <begin position="1"/>
        <end position="693"/>
    </location>
</feature>
<feature type="domain" description="tr-type G">
    <location>
        <begin position="8"/>
        <end position="283"/>
    </location>
</feature>
<feature type="binding site" evidence="1">
    <location>
        <begin position="17"/>
        <end position="24"/>
    </location>
    <ligand>
        <name>GTP</name>
        <dbReference type="ChEBI" id="CHEBI:37565"/>
    </ligand>
</feature>
<feature type="binding site" evidence="1">
    <location>
        <begin position="81"/>
        <end position="85"/>
    </location>
    <ligand>
        <name>GTP</name>
        <dbReference type="ChEBI" id="CHEBI:37565"/>
    </ligand>
</feature>
<feature type="binding site" evidence="1">
    <location>
        <begin position="135"/>
        <end position="138"/>
    </location>
    <ligand>
        <name>GTP</name>
        <dbReference type="ChEBI" id="CHEBI:37565"/>
    </ligand>
</feature>
<proteinExistence type="inferred from homology"/>
<name>EFG_OLEA2</name>
<evidence type="ECO:0000255" key="1">
    <source>
        <dbReference type="HAMAP-Rule" id="MF_00054"/>
    </source>
</evidence>
<comment type="function">
    <text evidence="1">Catalyzes the GTP-dependent ribosomal translocation step during translation elongation. During this step, the ribosome changes from the pre-translocational (PRE) to the post-translocational (POST) state as the newly formed A-site-bound peptidyl-tRNA and P-site-bound deacylated tRNA move to the P and E sites, respectively. Catalyzes the coordinated movement of the two tRNA molecules, the mRNA and conformational changes in the ribosome.</text>
</comment>
<comment type="subcellular location">
    <subcellularLocation>
        <location evidence="1">Cytoplasm</location>
    </subcellularLocation>
</comment>
<comment type="similarity">
    <text evidence="1">Belongs to the TRAFAC class translation factor GTPase superfamily. Classic translation factor GTPase family. EF-G/EF-2 subfamily.</text>
</comment>